<dbReference type="SMR" id="P86989"/>
<dbReference type="GO" id="GO:0005576">
    <property type="term" value="C:extracellular region"/>
    <property type="evidence" value="ECO:0007669"/>
    <property type="project" value="UniProtKB-SubCell"/>
</dbReference>
<dbReference type="GO" id="GO:0019871">
    <property type="term" value="F:sodium channel inhibitor activity"/>
    <property type="evidence" value="ECO:0007669"/>
    <property type="project" value="InterPro"/>
</dbReference>
<dbReference type="GO" id="GO:0090729">
    <property type="term" value="F:toxin activity"/>
    <property type="evidence" value="ECO:0007669"/>
    <property type="project" value="UniProtKB-KW"/>
</dbReference>
<dbReference type="CDD" id="cd23106">
    <property type="entry name" value="neurotoxins_LC_scorpion"/>
    <property type="match status" value="1"/>
</dbReference>
<dbReference type="Gene3D" id="3.30.30.10">
    <property type="entry name" value="Knottin, scorpion toxin-like"/>
    <property type="match status" value="1"/>
</dbReference>
<dbReference type="InterPro" id="IPR044062">
    <property type="entry name" value="LCN-type_CS_alpha_beta_dom"/>
</dbReference>
<dbReference type="InterPro" id="IPR036574">
    <property type="entry name" value="Scorpion_toxin-like_sf"/>
</dbReference>
<dbReference type="InterPro" id="IPR002061">
    <property type="entry name" value="Scorpion_toxinL/defensin"/>
</dbReference>
<dbReference type="Pfam" id="PF00537">
    <property type="entry name" value="Toxin_3"/>
    <property type="match status" value="1"/>
</dbReference>
<dbReference type="SUPFAM" id="SSF57095">
    <property type="entry name" value="Scorpion toxin-like"/>
    <property type="match status" value="1"/>
</dbReference>
<dbReference type="PROSITE" id="PS51863">
    <property type="entry name" value="LCN_CSAB"/>
    <property type="match status" value="1"/>
</dbReference>
<name>SCXP_RHOJU</name>
<organism>
    <name type="scientific">Rhopalurus junceus</name>
    <name type="common">Caribbean blue scorpion</name>
    <dbReference type="NCBI Taxonomy" id="419285"/>
    <lineage>
        <taxon>Eukaryota</taxon>
        <taxon>Metazoa</taxon>
        <taxon>Ecdysozoa</taxon>
        <taxon>Arthropoda</taxon>
        <taxon>Chelicerata</taxon>
        <taxon>Arachnida</taxon>
        <taxon>Scorpiones</taxon>
        <taxon>Buthida</taxon>
        <taxon>Buthoidea</taxon>
        <taxon>Buthidae</taxon>
        <taxon>Rhopalurus</taxon>
    </lineage>
</organism>
<sequence>KEGYPKNSEGCKITCLFNDPYCKGLCINLSTQADY</sequence>
<comment type="function">
    <text evidence="4">Causes paralysis and death in insects (A.domestica).</text>
</comment>
<comment type="subcellular location">
    <subcellularLocation>
        <location evidence="4">Secreted</location>
    </subcellularLocation>
</comment>
<comment type="tissue specificity">
    <text evidence="7">Expressed by the venom gland.</text>
</comment>
<comment type="domain">
    <text evidence="6">Has the structural arrangement of an alpha-helix connected to antiparallel beta-sheets by disulfide bonds (CS-alpha/beta).</text>
</comment>
<comment type="mass spectrometry"/>
<comment type="similarity">
    <text evidence="2">Belongs to the long (4 C-C) scorpion toxin superfamily. Sodium channel inhibitor family.</text>
</comment>
<proteinExistence type="evidence at protein level"/>
<accession>P86989</accession>
<keyword id="KW-0903">Direct protein sequencing</keyword>
<keyword id="KW-1015">Disulfide bond</keyword>
<keyword id="KW-0528">Neurotoxin</keyword>
<keyword id="KW-0964">Secreted</keyword>
<keyword id="KW-0800">Toxin</keyword>
<reference evidence="6" key="1">
    <citation type="journal article" date="2011" name="Toxicon">
        <title>Biochemical and molecular characterization of the venom from the Cuban scorpion Rhopalurus junceus.</title>
        <authorList>
            <person name="Garcia-Gomez B.I."/>
            <person name="Coronas F.I."/>
            <person name="Restano-Cassulini R."/>
            <person name="Rodriguez R.R."/>
            <person name="Possani L.D."/>
        </authorList>
    </citation>
    <scope>PROTEIN SEQUENCE</scope>
    <scope>FUNCTION</scope>
    <scope>SUBCELLULAR LOCATION</scope>
    <scope>MASS SPECTROMETRY</scope>
    <source>
        <tissue evidence="4">Venom</tissue>
    </source>
</reference>
<feature type="chain" id="PRO_0000413462" description="Putative neurotoxin">
    <location>
        <begin position="1"/>
        <end position="35" status="greater than"/>
    </location>
</feature>
<feature type="domain" description="LCN-type CS-alpha/beta" evidence="3">
    <location>
        <begin position="1"/>
        <end position="35" status="greater than"/>
    </location>
</feature>
<feature type="disulfide bond" evidence="1">
    <location>
        <begin position="11"/>
        <end status="unknown"/>
    </location>
</feature>
<feature type="disulfide bond" evidence="1">
    <location>
        <begin position="15"/>
        <end status="unknown"/>
    </location>
</feature>
<feature type="disulfide bond" evidence="1">
    <location>
        <begin position="22"/>
        <end status="unknown"/>
    </location>
</feature>
<feature type="disulfide bond" evidence="1">
    <location>
        <begin position="26"/>
        <end status="unknown"/>
    </location>
</feature>
<feature type="non-terminal residue" evidence="5">
    <location>
        <position position="35"/>
    </location>
</feature>
<evidence type="ECO:0000250" key="1">
    <source>
        <dbReference type="UniProtKB" id="P15226"/>
    </source>
</evidence>
<evidence type="ECO:0000255" key="2"/>
<evidence type="ECO:0000255" key="3">
    <source>
        <dbReference type="PROSITE-ProRule" id="PRU01210"/>
    </source>
</evidence>
<evidence type="ECO:0000269" key="4">
    <source>
    </source>
</evidence>
<evidence type="ECO:0000303" key="5">
    <source>
    </source>
</evidence>
<evidence type="ECO:0000305" key="6"/>
<evidence type="ECO:0000305" key="7">
    <source>
    </source>
</evidence>
<protein>
    <recommendedName>
        <fullName evidence="7">Putative neurotoxin</fullName>
    </recommendedName>
</protein>